<accession>P05893</accession>
<reference key="1">
    <citation type="journal article" date="1988" name="Nature">
        <title>Comparison of simian immunodeficiency virus isolates.</title>
        <authorList>
            <person name="Kestler H.W."/>
            <person name="Li Y."/>
            <person name="Naidu Y.M."/>
            <person name="Butler C.V."/>
            <person name="Ochs M.F."/>
            <person name="Jaenel G."/>
            <person name="King N.W."/>
            <person name="Daniel M.D."/>
            <person name="Desrosiers R.C."/>
        </authorList>
    </citation>
    <scope>NUCLEOTIDE SEQUENCE [GENOMIC DNA]</scope>
</reference>
<reference evidence="8" key="2">
    <citation type="journal article" date="2011" name="J. Virol.">
        <title>Identification and structural characterization of the ALIX-binding late domains of simian immunodeficiency virus SIVmac239 and SIVagmTan-1.</title>
        <authorList>
            <person name="Zhai Q."/>
            <person name="Landesman M.B."/>
            <person name="Robinson H."/>
            <person name="Sundquist W.I."/>
            <person name="Hill C.P."/>
        </authorList>
    </citation>
    <scope>X-RAY CRYSTALLOGRAPHY (2.30 ANGSTROMS) OF 483-502</scope>
    <scope>MUTAGENESIS OF 458-PRO--PRO-461</scope>
    <scope>DOMAIN</scope>
    <source>
        <strain>Isolate SIVmac239</strain>
    </source>
</reference>
<organismHost>
    <name type="scientific">Cercopithecidae</name>
    <name type="common">Old World monkeys</name>
    <dbReference type="NCBI Taxonomy" id="9527"/>
</organismHost>
<gene>
    <name type="primary">gag</name>
</gene>
<protein>
    <recommendedName>
        <fullName>Gag polyprotein</fullName>
    </recommendedName>
    <alternativeName>
        <fullName>Pr55Gag</fullName>
    </alternativeName>
    <component>
        <recommendedName>
            <fullName>Matrix protein p17</fullName>
            <shortName>MA</shortName>
        </recommendedName>
    </component>
    <component>
        <recommendedName>
            <fullName>Capsid protein p24</fullName>
            <shortName>CA</shortName>
        </recommendedName>
    </component>
    <component>
        <recommendedName>
            <fullName>Spacer peptide p2</fullName>
        </recommendedName>
    </component>
    <component>
        <recommendedName>
            <fullName>Nucleocapsid protein p7</fullName>
            <shortName>NC</shortName>
        </recommendedName>
    </component>
    <component>
        <recommendedName>
            <fullName>Spacer peptide p1</fullName>
        </recommendedName>
    </component>
    <component>
        <recommendedName>
            <fullName>p6-gag</fullName>
        </recommendedName>
    </component>
</protein>
<keyword id="KW-0002">3D-structure</keyword>
<keyword id="KW-0167">Capsid protein</keyword>
<keyword id="KW-1032">Host cell membrane</keyword>
<keyword id="KW-1035">Host cytoplasm</keyword>
<keyword id="KW-1043">Host membrane</keyword>
<keyword id="KW-1048">Host nucleus</keyword>
<keyword id="KW-0945">Host-virus interaction</keyword>
<keyword id="KW-0449">Lipoprotein</keyword>
<keyword id="KW-0472">Membrane</keyword>
<keyword id="KW-0479">Metal-binding</keyword>
<keyword id="KW-0519">Myristate</keyword>
<keyword id="KW-0597">Phosphoprotein</keyword>
<keyword id="KW-0677">Repeat</keyword>
<keyword id="KW-0688">Ribosomal frameshifting</keyword>
<keyword id="KW-0694">RNA-binding</keyword>
<keyword id="KW-1198">Viral budding</keyword>
<keyword id="KW-1187">Viral budding via the host ESCRT complexes</keyword>
<keyword id="KW-0543">Viral nucleoprotein</keyword>
<keyword id="KW-1188">Viral release from host cell</keyword>
<keyword id="KW-0946">Virion</keyword>
<keyword id="KW-0862">Zinc</keyword>
<keyword id="KW-0863">Zinc-finger</keyword>
<comment type="function">
    <text evidence="1">Matrix protein p17 targets Gag and Gag-Pol polyproteins to the plasma membrane via a multipartite membrane binding signal, that includes its myristoylated N-terminus. Also mediates nuclear localization of the preintegration complex. Implicated in the release from host cell mediated by Vpu (By similarity).</text>
</comment>
<comment type="function">
    <text evidence="1">Capsid protein p24 forms the conical core of the virus that encapsulates the genomic RNA-nucleocapsid complex.</text>
</comment>
<comment type="function">
    <text evidence="1">Nucleocapsid protein p7 encapsulates and protects viral dimeric unspliced (genomic) RNA. Binds these RNAs through its zinc fingers (By similarity).</text>
</comment>
<comment type="function">
    <text evidence="1">p6-gag plays a role in budding of the assembled particle by interacting with the host class E VPS proteins TSG101 and PDCD6IP/AIP1.</text>
</comment>
<comment type="subunit">
    <molecule>Matrix protein p17</molecule>
    <text evidence="2 3">Homotrimer. Interacts with gp41 (via C-terminus).</text>
</comment>
<comment type="subunit">
    <molecule>p6-gag</molecule>
    <text evidence="3">Interacts with host TSG101 (By similarity).</text>
</comment>
<comment type="subcellular location">
    <molecule>Matrix protein p17</molecule>
    <subcellularLocation>
        <location evidence="7">Virion</location>
    </subcellularLocation>
    <subcellularLocation>
        <location evidence="1">Host nucleus</location>
    </subcellularLocation>
    <subcellularLocation>
        <location evidence="1">Host cytoplasm</location>
    </subcellularLocation>
    <subcellularLocation>
        <location evidence="7">Host cell membrane</location>
        <topology evidence="7">Lipid-anchor</topology>
    </subcellularLocation>
    <text evidence="1">Following virus entry, the nuclear localization signal (NLS) of the matrix protein participates with Vpr to the nuclear localization of the viral genome. During virus production, the nuclear export activity of the matrix protein counteracts the NLS to maintain the Gag and Gag-Pol polyproteins in the cytoplasm, thereby directing unspliced RNA to the plasma membrane (By similarity).</text>
</comment>
<comment type="subcellular location">
    <molecule>Capsid protein p24</molecule>
    <subcellularLocation>
        <location evidence="7">Virion</location>
    </subcellularLocation>
</comment>
<comment type="subcellular location">
    <molecule>Nucleocapsid protein p7</molecule>
    <subcellularLocation>
        <location evidence="7">Virion</location>
    </subcellularLocation>
</comment>
<comment type="alternative products">
    <event type="ribosomal frameshifting"/>
    <isoform>
        <id>P05893-1</id>
        <name>Gag polyprotein</name>
        <sequence type="displayed"/>
    </isoform>
    <isoform>
        <id>P05897-1</id>
        <name>Gag-Pol polyprotein</name>
        <sequence type="external"/>
    </isoform>
    <text>Translation results in the formation of the Gag polyprotein most of the time. Ribosomal frameshifting at the gag-pol genes boundary occurs at low frequency and produces the Gag-Pol polyprotein. This strategy of translation probably allows the virus to modulate the quantity of each viral protein. Maintenance of a correct Gag to Gag-Pol ratio is essential for RNA dimerization and viral infectivity.</text>
</comment>
<comment type="domain">
    <text evidence="6">Late-budding domains (L domains) are short sequence motifs essential for viral particle budding. They recruit proteins of the host ESCRT machinery (Endosomal Sorting Complex Required for Transport) or ESCRT-associated proteins. p6-gag contains two L domains: a PTAP/PSAP motif, which interacts with the UEV domain of TSG101 and an ALIX binding motif.</text>
</comment>
<comment type="PTM">
    <text evidence="1">Capsid protein p24 is phosphorylated.</text>
</comment>
<comment type="PTM">
    <text evidence="1">Specific enzymatic cleavages by the viral protease yield mature proteins. The polyprotein is cleaved during and after budding, this process is termed maturation (By similarity).</text>
</comment>
<comment type="miscellaneous">
    <text>This is probably a macaque isolate.</text>
</comment>
<comment type="miscellaneous">
    <molecule>Isoform Gag polyprotein</molecule>
    <text>Produced by conventional translation.</text>
</comment>
<comment type="similarity">
    <text evidence="7">Belongs to the primate lentivirus group gag polyprotein family.</text>
</comment>
<feature type="initiator methionine" description="Removed; by host" evidence="1">
    <location>
        <position position="1"/>
    </location>
</feature>
<feature type="chain" id="PRO_0000316130" description="Gag polyprotein" evidence="1">
    <location>
        <begin position="2"/>
        <end position="506"/>
    </location>
</feature>
<feature type="chain" id="PRO_0000038636" description="Matrix protein p17" evidence="1">
    <location>
        <begin position="2"/>
        <end position="135"/>
    </location>
</feature>
<feature type="chain" id="PRO_0000038637" description="Capsid protein p24" evidence="1">
    <location>
        <begin position="136"/>
        <end position="364"/>
    </location>
</feature>
<feature type="peptide" id="PRO_0000316131" description="Spacer peptide p2" evidence="1">
    <location>
        <begin position="365"/>
        <end position="379"/>
    </location>
</feature>
<feature type="chain" id="PRO_0000316132" description="Nucleocapsid protein p7" evidence="1">
    <location>
        <begin position="380"/>
        <end position="433"/>
    </location>
</feature>
<feature type="peptide" id="PRO_0000316133" description="Spacer peptide p1" evidence="1">
    <location>
        <begin position="434"/>
        <end position="447"/>
    </location>
</feature>
<feature type="chain" id="PRO_0000316134" description="p6-gag" evidence="1">
    <location>
        <begin position="448"/>
        <end position="506"/>
    </location>
</feature>
<feature type="zinc finger region" description="CCHC-type 1" evidence="4">
    <location>
        <begin position="391"/>
        <end position="408"/>
    </location>
</feature>
<feature type="zinc finger region" description="CCHC-type 2" evidence="4">
    <location>
        <begin position="412"/>
        <end position="429"/>
    </location>
</feature>
<feature type="region of interest" description="Disordered" evidence="5">
    <location>
        <begin position="114"/>
        <end position="133"/>
    </location>
</feature>
<feature type="region of interest" description="Disordered" evidence="5">
    <location>
        <begin position="217"/>
        <end position="239"/>
    </location>
</feature>
<feature type="region of interest" description="Interaction with host ALIX" evidence="6">
    <location>
        <begin position="485"/>
        <end position="498"/>
    </location>
</feature>
<feature type="short sequence motif" description="Nuclear export signal" evidence="1">
    <location>
        <begin position="16"/>
        <end position="22"/>
    </location>
</feature>
<feature type="short sequence motif" description="Nuclear localization signal" evidence="1">
    <location>
        <begin position="26"/>
        <end position="32"/>
    </location>
</feature>
<feature type="short sequence motif" description="PTAP/PSAP motif">
    <location>
        <begin position="458"/>
        <end position="461"/>
    </location>
</feature>
<feature type="compositionally biased region" description="Polar residues" evidence="5">
    <location>
        <begin position="119"/>
        <end position="128"/>
    </location>
</feature>
<feature type="site" description="Cleavage; by viral protease" evidence="1">
    <location>
        <begin position="135"/>
        <end position="136"/>
    </location>
</feature>
<feature type="site" description="Cleavage; by viral protease" evidence="1">
    <location>
        <begin position="447"/>
        <end position="448"/>
    </location>
</feature>
<feature type="lipid moiety-binding region" description="N-myristoyl glycine; by host" evidence="1">
    <location>
        <position position="2"/>
    </location>
</feature>
<feature type="mutagenesis site" description="Drastic loss of release of viral particles." evidence="6">
    <original>PTAP</original>
    <variation>LIAL</variation>
    <location>
        <begin position="458"/>
        <end position="461"/>
    </location>
</feature>
<feature type="mutagenesis site" description="Reduced release of viral particles; when associated with S-495." evidence="6">
    <original>Y</original>
    <variation>S</variation>
    <location>
        <position position="488"/>
    </location>
</feature>
<feature type="mutagenesis site" description="Reduced release of viral particles; when associated with S-488." evidence="6">
    <original>L</original>
    <variation>S</variation>
    <location>
        <position position="495"/>
    </location>
</feature>
<feature type="helix" evidence="10">
    <location>
        <begin position="465"/>
        <end position="474"/>
    </location>
</feature>
<feature type="helix" evidence="9">
    <location>
        <begin position="489"/>
        <end position="498"/>
    </location>
</feature>
<name>GAG_SIVM2</name>
<dbReference type="EMBL" id="M19499">
    <property type="protein sequence ID" value="AAB59905.1"/>
    <property type="molecule type" value="Genomic_RNA"/>
</dbReference>
<dbReference type="PDB" id="2XS1">
    <property type="method" value="X-ray"/>
    <property type="resolution" value="2.30 A"/>
    <property type="chains" value="B=483-502"/>
</dbReference>
<dbReference type="PDB" id="7P3M">
    <property type="method" value="NMR"/>
    <property type="chains" value="A=463-475"/>
</dbReference>
<dbReference type="PDBsum" id="2XS1"/>
<dbReference type="PDBsum" id="7P3M"/>
<dbReference type="SMR" id="P05893"/>
<dbReference type="PRO" id="PR:P05893"/>
<dbReference type="Proteomes" id="UP000258290">
    <property type="component" value="Segment"/>
</dbReference>
<dbReference type="GO" id="GO:0030430">
    <property type="term" value="C:host cell cytoplasm"/>
    <property type="evidence" value="ECO:0007669"/>
    <property type="project" value="UniProtKB-SubCell"/>
</dbReference>
<dbReference type="GO" id="GO:0042025">
    <property type="term" value="C:host cell nucleus"/>
    <property type="evidence" value="ECO:0007669"/>
    <property type="project" value="UniProtKB-SubCell"/>
</dbReference>
<dbReference type="GO" id="GO:0020002">
    <property type="term" value="C:host cell plasma membrane"/>
    <property type="evidence" value="ECO:0007669"/>
    <property type="project" value="UniProtKB-SubCell"/>
</dbReference>
<dbReference type="GO" id="GO:0016020">
    <property type="term" value="C:membrane"/>
    <property type="evidence" value="ECO:0007669"/>
    <property type="project" value="UniProtKB-KW"/>
</dbReference>
<dbReference type="GO" id="GO:0019013">
    <property type="term" value="C:viral nucleocapsid"/>
    <property type="evidence" value="ECO:0007669"/>
    <property type="project" value="UniProtKB-KW"/>
</dbReference>
<dbReference type="GO" id="GO:0003723">
    <property type="term" value="F:RNA binding"/>
    <property type="evidence" value="ECO:0007669"/>
    <property type="project" value="UniProtKB-KW"/>
</dbReference>
<dbReference type="GO" id="GO:0005198">
    <property type="term" value="F:structural molecule activity"/>
    <property type="evidence" value="ECO:0007669"/>
    <property type="project" value="InterPro"/>
</dbReference>
<dbReference type="GO" id="GO:0008270">
    <property type="term" value="F:zinc ion binding"/>
    <property type="evidence" value="ECO:0007669"/>
    <property type="project" value="UniProtKB-KW"/>
</dbReference>
<dbReference type="GO" id="GO:0039702">
    <property type="term" value="P:viral budding via host ESCRT complex"/>
    <property type="evidence" value="ECO:0007669"/>
    <property type="project" value="UniProtKB-KW"/>
</dbReference>
<dbReference type="GO" id="GO:0075523">
    <property type="term" value="P:viral translational frameshifting"/>
    <property type="evidence" value="ECO:0007669"/>
    <property type="project" value="UniProtKB-KW"/>
</dbReference>
<dbReference type="Gene3D" id="1.10.1200.30">
    <property type="match status" value="1"/>
</dbReference>
<dbReference type="Gene3D" id="1.10.375.10">
    <property type="entry name" value="Human Immunodeficiency Virus Type 1 Capsid Protein"/>
    <property type="match status" value="1"/>
</dbReference>
<dbReference type="Gene3D" id="1.10.150.90">
    <property type="entry name" value="Immunodeficiency lentiviruses, gag gene matrix protein p17"/>
    <property type="match status" value="1"/>
</dbReference>
<dbReference type="Gene3D" id="1.20.5.760">
    <property type="entry name" value="Single helix bin"/>
    <property type="match status" value="1"/>
</dbReference>
<dbReference type="Gene3D" id="4.10.60.10">
    <property type="entry name" value="Zinc finger, CCHC-type"/>
    <property type="match status" value="1"/>
</dbReference>
<dbReference type="InterPro" id="IPR045345">
    <property type="entry name" value="Gag_p24_C"/>
</dbReference>
<dbReference type="InterPro" id="IPR000071">
    <property type="entry name" value="Lentvrl_matrix_N"/>
</dbReference>
<dbReference type="InterPro" id="IPR012344">
    <property type="entry name" value="Matrix_HIV/RSV_N"/>
</dbReference>
<dbReference type="InterPro" id="IPR050195">
    <property type="entry name" value="Primate_lentivir_Gag_pol-like"/>
</dbReference>
<dbReference type="InterPro" id="IPR008916">
    <property type="entry name" value="Retrov_capsid_C"/>
</dbReference>
<dbReference type="InterPro" id="IPR008919">
    <property type="entry name" value="Retrov_capsid_N"/>
</dbReference>
<dbReference type="InterPro" id="IPR010999">
    <property type="entry name" value="Retrovr_matrix"/>
</dbReference>
<dbReference type="InterPro" id="IPR001878">
    <property type="entry name" value="Znf_CCHC"/>
</dbReference>
<dbReference type="InterPro" id="IPR036875">
    <property type="entry name" value="Znf_CCHC_sf"/>
</dbReference>
<dbReference type="PANTHER" id="PTHR40389:SF4">
    <property type="match status" value="1"/>
</dbReference>
<dbReference type="PANTHER" id="PTHR40389">
    <property type="entry name" value="ENDOGENOUS RETROVIRUS GROUP K MEMBER 24 GAG POLYPROTEIN-RELATED"/>
    <property type="match status" value="1"/>
</dbReference>
<dbReference type="Pfam" id="PF00540">
    <property type="entry name" value="Gag_p17"/>
    <property type="match status" value="1"/>
</dbReference>
<dbReference type="Pfam" id="PF00607">
    <property type="entry name" value="Gag_p24"/>
    <property type="match status" value="1"/>
</dbReference>
<dbReference type="Pfam" id="PF19317">
    <property type="entry name" value="Gag_p24_C"/>
    <property type="match status" value="1"/>
</dbReference>
<dbReference type="Pfam" id="PF00098">
    <property type="entry name" value="zf-CCHC"/>
    <property type="match status" value="1"/>
</dbReference>
<dbReference type="PRINTS" id="PR00234">
    <property type="entry name" value="HIV1MATRIX"/>
</dbReference>
<dbReference type="SMART" id="SM00343">
    <property type="entry name" value="ZnF_C2HC"/>
    <property type="match status" value="2"/>
</dbReference>
<dbReference type="SUPFAM" id="SSF47836">
    <property type="entry name" value="Retroviral matrix proteins"/>
    <property type="match status" value="1"/>
</dbReference>
<dbReference type="SUPFAM" id="SSF47353">
    <property type="entry name" value="Retrovirus capsid dimerization domain-like"/>
    <property type="match status" value="1"/>
</dbReference>
<dbReference type="SUPFAM" id="SSF47943">
    <property type="entry name" value="Retrovirus capsid protein, N-terminal core domain"/>
    <property type="match status" value="1"/>
</dbReference>
<dbReference type="SUPFAM" id="SSF57756">
    <property type="entry name" value="Retrovirus zinc finger-like domains"/>
    <property type="match status" value="1"/>
</dbReference>
<dbReference type="PROSITE" id="PS50158">
    <property type="entry name" value="ZF_CCHC"/>
    <property type="match status" value="2"/>
</dbReference>
<sequence>MGARNSVLSGKKADELEKIRLRPGGKKKYMLKHVVWAANELDRFGLAESLLENKEGCQKILSVLAPLVPTGSENLKSLYNTVCVIWCIHAEEKVKHTEEAKQIVQRHLVVETGTAETMPKTSRPTAPSSGRGGNYPVQQIGGNYVHLPLSPRTLNAWVKLIEEKKFGAEVVPGFQALSEGCTPYDINQMLNCVGDHQAAMQIIRDIINEEAADWDLQHPQPAPQQGQLREPSGSDIAGTTSSVDEQIQWMYRQQNPIPVGNIYRRWIQLGLQKCVRMYNPTNILDVKQGPKEPFQSYVDRFYKSLRAEQTDAAVKNWMTQTLLIQNANPDCKLVLKGLGVNPTLEEMLTACQGVGGPGQKARLMAEALKEALAPVPIPFAAAQKRGPRKPIKCWNCGKEGHSARQCRAPRRQGCWKCGKMDHVMAKCPDRQAGFLGLGPWGKKPRNFPMAQVHQGLTPTAPPEDPAVDLLKNYMQLGKQQRESREKPYKEVTEDLLHLNSLFGGDQ</sequence>
<evidence type="ECO:0000250" key="1"/>
<evidence type="ECO:0000250" key="2">
    <source>
        <dbReference type="UniProtKB" id="P04591"/>
    </source>
</evidence>
<evidence type="ECO:0000250" key="3">
    <source>
        <dbReference type="UniProtKB" id="P12493"/>
    </source>
</evidence>
<evidence type="ECO:0000255" key="4">
    <source>
        <dbReference type="PROSITE-ProRule" id="PRU00047"/>
    </source>
</evidence>
<evidence type="ECO:0000256" key="5">
    <source>
        <dbReference type="SAM" id="MobiDB-lite"/>
    </source>
</evidence>
<evidence type="ECO:0000269" key="6">
    <source>
    </source>
</evidence>
<evidence type="ECO:0000305" key="7"/>
<evidence type="ECO:0007744" key="8">
    <source>
        <dbReference type="PDB" id="2XS1"/>
    </source>
</evidence>
<evidence type="ECO:0007829" key="9">
    <source>
        <dbReference type="PDB" id="2XS1"/>
    </source>
</evidence>
<evidence type="ECO:0007829" key="10">
    <source>
        <dbReference type="PDB" id="7P3M"/>
    </source>
</evidence>
<organism>
    <name type="scientific">Simian immunodeficiency virus (isolate Mm251)</name>
    <name type="common">SIV-mac</name>
    <name type="synonym">Simian immunodeficiency virus rhesus monkey</name>
    <dbReference type="NCBI Taxonomy" id="11734"/>
    <lineage>
        <taxon>Viruses</taxon>
        <taxon>Riboviria</taxon>
        <taxon>Pararnavirae</taxon>
        <taxon>Artverviricota</taxon>
        <taxon>Revtraviricetes</taxon>
        <taxon>Ortervirales</taxon>
        <taxon>Retroviridae</taxon>
        <taxon>Orthoretrovirinae</taxon>
        <taxon>Lentivirus</taxon>
        <taxon>Simian immunodeficiency virus</taxon>
    </lineage>
</organism>
<proteinExistence type="evidence at protein level"/>